<organism>
    <name type="scientific">Psychrobacter cryohalolentis (strain ATCC BAA-1226 / DSM 17306 / VKM B-2378 / K5)</name>
    <dbReference type="NCBI Taxonomy" id="335284"/>
    <lineage>
        <taxon>Bacteria</taxon>
        <taxon>Pseudomonadati</taxon>
        <taxon>Pseudomonadota</taxon>
        <taxon>Gammaproteobacteria</taxon>
        <taxon>Moraxellales</taxon>
        <taxon>Moraxellaceae</taxon>
        <taxon>Psychrobacter</taxon>
    </lineage>
</organism>
<evidence type="ECO:0000255" key="1">
    <source>
        <dbReference type="HAMAP-Rule" id="MF_00139"/>
    </source>
</evidence>
<evidence type="ECO:0000255" key="2">
    <source>
        <dbReference type="PROSITE-ProRule" id="PRU01202"/>
    </source>
</evidence>
<accession>Q1QA75</accession>
<dbReference type="EC" id="2.1.2.3" evidence="1"/>
<dbReference type="EC" id="3.5.4.10" evidence="1"/>
<dbReference type="EMBL" id="CP000323">
    <property type="protein sequence ID" value="ABE75428.1"/>
    <property type="molecule type" value="Genomic_DNA"/>
</dbReference>
<dbReference type="RefSeq" id="WP_011513977.1">
    <property type="nucleotide sequence ID" value="NC_007969.1"/>
</dbReference>
<dbReference type="SMR" id="Q1QA75"/>
<dbReference type="STRING" id="335284.Pcryo_1651"/>
<dbReference type="KEGG" id="pcr:Pcryo_1651"/>
<dbReference type="eggNOG" id="COG0138">
    <property type="taxonomic scope" value="Bacteria"/>
</dbReference>
<dbReference type="HOGENOM" id="CLU_016316_5_2_6"/>
<dbReference type="UniPathway" id="UPA00074">
    <property type="reaction ID" value="UER00133"/>
</dbReference>
<dbReference type="UniPathway" id="UPA00074">
    <property type="reaction ID" value="UER00135"/>
</dbReference>
<dbReference type="Proteomes" id="UP000002425">
    <property type="component" value="Chromosome"/>
</dbReference>
<dbReference type="GO" id="GO:0005829">
    <property type="term" value="C:cytosol"/>
    <property type="evidence" value="ECO:0007669"/>
    <property type="project" value="TreeGrafter"/>
</dbReference>
<dbReference type="GO" id="GO:0003937">
    <property type="term" value="F:IMP cyclohydrolase activity"/>
    <property type="evidence" value="ECO:0007669"/>
    <property type="project" value="UniProtKB-UniRule"/>
</dbReference>
<dbReference type="GO" id="GO:0004643">
    <property type="term" value="F:phosphoribosylaminoimidazolecarboxamide formyltransferase activity"/>
    <property type="evidence" value="ECO:0007669"/>
    <property type="project" value="UniProtKB-UniRule"/>
</dbReference>
<dbReference type="GO" id="GO:0006189">
    <property type="term" value="P:'de novo' IMP biosynthetic process"/>
    <property type="evidence" value="ECO:0007669"/>
    <property type="project" value="UniProtKB-UniRule"/>
</dbReference>
<dbReference type="CDD" id="cd01421">
    <property type="entry name" value="IMPCH"/>
    <property type="match status" value="1"/>
</dbReference>
<dbReference type="FunFam" id="3.40.140.20:FF:000001">
    <property type="entry name" value="Bifunctional purine biosynthesis protein PurH"/>
    <property type="match status" value="1"/>
</dbReference>
<dbReference type="FunFam" id="3.40.140.20:FF:000002">
    <property type="entry name" value="Bifunctional purine biosynthesis protein PurH"/>
    <property type="match status" value="1"/>
</dbReference>
<dbReference type="FunFam" id="3.40.50.1380:FF:000001">
    <property type="entry name" value="Bifunctional purine biosynthesis protein PurH"/>
    <property type="match status" value="1"/>
</dbReference>
<dbReference type="Gene3D" id="3.40.140.20">
    <property type="match status" value="2"/>
</dbReference>
<dbReference type="Gene3D" id="3.40.50.1380">
    <property type="entry name" value="Methylglyoxal synthase-like domain"/>
    <property type="match status" value="1"/>
</dbReference>
<dbReference type="HAMAP" id="MF_00139">
    <property type="entry name" value="PurH"/>
    <property type="match status" value="1"/>
</dbReference>
<dbReference type="InterPro" id="IPR024051">
    <property type="entry name" value="AICAR_Tfase_dup_dom_sf"/>
</dbReference>
<dbReference type="InterPro" id="IPR016193">
    <property type="entry name" value="Cytidine_deaminase-like"/>
</dbReference>
<dbReference type="InterPro" id="IPR011607">
    <property type="entry name" value="MGS-like_dom"/>
</dbReference>
<dbReference type="InterPro" id="IPR036914">
    <property type="entry name" value="MGS-like_dom_sf"/>
</dbReference>
<dbReference type="InterPro" id="IPR002695">
    <property type="entry name" value="PurH-like"/>
</dbReference>
<dbReference type="NCBIfam" id="NF002049">
    <property type="entry name" value="PRK00881.1"/>
    <property type="match status" value="1"/>
</dbReference>
<dbReference type="NCBIfam" id="TIGR00355">
    <property type="entry name" value="purH"/>
    <property type="match status" value="1"/>
</dbReference>
<dbReference type="PANTHER" id="PTHR11692:SF0">
    <property type="entry name" value="BIFUNCTIONAL PURINE BIOSYNTHESIS PROTEIN ATIC"/>
    <property type="match status" value="1"/>
</dbReference>
<dbReference type="PANTHER" id="PTHR11692">
    <property type="entry name" value="BIFUNCTIONAL PURINE BIOSYNTHESIS PROTEIN PURH"/>
    <property type="match status" value="1"/>
</dbReference>
<dbReference type="Pfam" id="PF01808">
    <property type="entry name" value="AICARFT_IMPCHas"/>
    <property type="match status" value="1"/>
</dbReference>
<dbReference type="Pfam" id="PF02142">
    <property type="entry name" value="MGS"/>
    <property type="match status" value="1"/>
</dbReference>
<dbReference type="PIRSF" id="PIRSF000414">
    <property type="entry name" value="AICARFT_IMPCHas"/>
    <property type="match status" value="1"/>
</dbReference>
<dbReference type="SMART" id="SM00798">
    <property type="entry name" value="AICARFT_IMPCHas"/>
    <property type="match status" value="1"/>
</dbReference>
<dbReference type="SMART" id="SM00851">
    <property type="entry name" value="MGS"/>
    <property type="match status" value="1"/>
</dbReference>
<dbReference type="SUPFAM" id="SSF53927">
    <property type="entry name" value="Cytidine deaminase-like"/>
    <property type="match status" value="1"/>
</dbReference>
<dbReference type="SUPFAM" id="SSF52335">
    <property type="entry name" value="Methylglyoxal synthase-like"/>
    <property type="match status" value="1"/>
</dbReference>
<dbReference type="PROSITE" id="PS51855">
    <property type="entry name" value="MGS"/>
    <property type="match status" value="1"/>
</dbReference>
<proteinExistence type="inferred from homology"/>
<comment type="catalytic activity">
    <reaction evidence="1">
        <text>(6R)-10-formyltetrahydrofolate + 5-amino-1-(5-phospho-beta-D-ribosyl)imidazole-4-carboxamide = 5-formamido-1-(5-phospho-D-ribosyl)imidazole-4-carboxamide + (6S)-5,6,7,8-tetrahydrofolate</text>
        <dbReference type="Rhea" id="RHEA:22192"/>
        <dbReference type="ChEBI" id="CHEBI:57453"/>
        <dbReference type="ChEBI" id="CHEBI:58467"/>
        <dbReference type="ChEBI" id="CHEBI:58475"/>
        <dbReference type="ChEBI" id="CHEBI:195366"/>
        <dbReference type="EC" id="2.1.2.3"/>
    </reaction>
</comment>
<comment type="catalytic activity">
    <reaction evidence="1">
        <text>IMP + H2O = 5-formamido-1-(5-phospho-D-ribosyl)imidazole-4-carboxamide</text>
        <dbReference type="Rhea" id="RHEA:18445"/>
        <dbReference type="ChEBI" id="CHEBI:15377"/>
        <dbReference type="ChEBI" id="CHEBI:58053"/>
        <dbReference type="ChEBI" id="CHEBI:58467"/>
        <dbReference type="EC" id="3.5.4.10"/>
    </reaction>
</comment>
<comment type="pathway">
    <text evidence="1">Purine metabolism; IMP biosynthesis via de novo pathway; 5-formamido-1-(5-phospho-D-ribosyl)imidazole-4-carboxamide from 5-amino-1-(5-phospho-D-ribosyl)imidazole-4-carboxamide (10-formyl THF route): step 1/1.</text>
</comment>
<comment type="pathway">
    <text evidence="1">Purine metabolism; IMP biosynthesis via de novo pathway; IMP from 5-formamido-1-(5-phospho-D-ribosyl)imidazole-4-carboxamide: step 1/1.</text>
</comment>
<comment type="domain">
    <text evidence="1">The IMP cyclohydrolase activity resides in the N-terminal region.</text>
</comment>
<comment type="similarity">
    <text evidence="1">Belongs to the PurH family.</text>
</comment>
<feature type="chain" id="PRO_1000057907" description="Bifunctional purine biosynthesis protein PurH">
    <location>
        <begin position="1"/>
        <end position="526"/>
    </location>
</feature>
<feature type="domain" description="MGS-like" evidence="2">
    <location>
        <begin position="1"/>
        <end position="145"/>
    </location>
</feature>
<name>PUR9_PSYCK</name>
<sequence length="526" mass="56554">MSKAPLALLSVSNKSNIVEFAQGLIKAGFGLLSTGGTFRLLTEHNVAVTEVSDYTGFPEMMDGRVKTLHPKIHGGILGRRGTDDAVMSEHAIERIDLVVVNLYPFAETIARSDVTMNDAIENIDIGGPTMVRSAAKNHAHVGIVTDPADYTRVLEALGDGTTLTHALRYDLAVKAFEHTAQYDGMIANFLGSRVNENQEPEDFSRTFNVQLEKVQDLRYGENPHQKAAFYVENNALKSKQASIATAKQLQGKALSYNNIADTDAALECVKAFSTPACVIVKHANPCGVAVDTDQVAAYRTAFSTDPESSFGGIIAFNRPLTLAAAKAIIDNQFVEVIIAPSIEDGVLEATASKKNVRVLVCGDLPAPELRDRQLDYKRVNGGLLVQEQDLGLITANDLKIVTDVQPTEAQIADLLFSWNVAKYVKSNAIVYAKGQRTIGVGAGQMSRVNSARIAAIKAEHAGLATEGAVMASDAFFPFRDGIDNAAEVGIAAIIQPGGSMRDDETIAAANEHGIAMVFTGMRHFRH</sequence>
<protein>
    <recommendedName>
        <fullName evidence="1">Bifunctional purine biosynthesis protein PurH</fullName>
    </recommendedName>
    <domain>
        <recommendedName>
            <fullName evidence="1">Phosphoribosylaminoimidazolecarboxamide formyltransferase</fullName>
            <ecNumber evidence="1">2.1.2.3</ecNumber>
        </recommendedName>
        <alternativeName>
            <fullName evidence="1">AICAR transformylase</fullName>
        </alternativeName>
    </domain>
    <domain>
        <recommendedName>
            <fullName evidence="1">IMP cyclohydrolase</fullName>
            <ecNumber evidence="1">3.5.4.10</ecNumber>
        </recommendedName>
        <alternativeName>
            <fullName evidence="1">ATIC</fullName>
        </alternativeName>
        <alternativeName>
            <fullName evidence="1">IMP synthase</fullName>
        </alternativeName>
        <alternativeName>
            <fullName evidence="1">Inosinicase</fullName>
        </alternativeName>
    </domain>
</protein>
<keyword id="KW-0378">Hydrolase</keyword>
<keyword id="KW-0511">Multifunctional enzyme</keyword>
<keyword id="KW-0658">Purine biosynthesis</keyword>
<keyword id="KW-0808">Transferase</keyword>
<gene>
    <name evidence="1" type="primary">purH</name>
    <name type="ordered locus">Pcryo_1651</name>
</gene>
<reference key="1">
    <citation type="submission" date="2006-03" db="EMBL/GenBank/DDBJ databases">
        <title>Complete sequence of chromosome of Psychrobacter cryohalolentis K5.</title>
        <authorList>
            <consortium name="US DOE Joint Genome Institute"/>
            <person name="Copeland A."/>
            <person name="Lucas S."/>
            <person name="Lapidus A."/>
            <person name="Barry K."/>
            <person name="Detter J.C."/>
            <person name="Glavina T."/>
            <person name="Hammon N."/>
            <person name="Israni S."/>
            <person name="Dalin E."/>
            <person name="Tice H."/>
            <person name="Pitluck S."/>
            <person name="Brettin T."/>
            <person name="Bruce D."/>
            <person name="Han C."/>
            <person name="Tapia R."/>
            <person name="Sims D.R."/>
            <person name="Gilna P."/>
            <person name="Schmutz J."/>
            <person name="Larimer F."/>
            <person name="Land M."/>
            <person name="Hauser L."/>
            <person name="Kyrpides N."/>
            <person name="Kim E."/>
            <person name="Richardson P."/>
        </authorList>
    </citation>
    <scope>NUCLEOTIDE SEQUENCE [LARGE SCALE GENOMIC DNA]</scope>
    <source>
        <strain>ATCC BAA-1226 / DSM 17306 / VKM B-2378 / K5</strain>
    </source>
</reference>